<gene>
    <name evidence="1" type="primary">queA</name>
    <name type="ordered locus">PTH_1031</name>
</gene>
<comment type="function">
    <text evidence="1">Transfers and isomerizes the ribose moiety from AdoMet to the 7-aminomethyl group of 7-deazaguanine (preQ1-tRNA) to give epoxyqueuosine (oQ-tRNA).</text>
</comment>
<comment type="catalytic activity">
    <reaction evidence="1">
        <text>7-aminomethyl-7-carbaguanosine(34) in tRNA + S-adenosyl-L-methionine = epoxyqueuosine(34) in tRNA + adenine + L-methionine + 2 H(+)</text>
        <dbReference type="Rhea" id="RHEA:32155"/>
        <dbReference type="Rhea" id="RHEA-COMP:10342"/>
        <dbReference type="Rhea" id="RHEA-COMP:18582"/>
        <dbReference type="ChEBI" id="CHEBI:15378"/>
        <dbReference type="ChEBI" id="CHEBI:16708"/>
        <dbReference type="ChEBI" id="CHEBI:57844"/>
        <dbReference type="ChEBI" id="CHEBI:59789"/>
        <dbReference type="ChEBI" id="CHEBI:82833"/>
        <dbReference type="ChEBI" id="CHEBI:194443"/>
        <dbReference type="EC" id="2.4.99.17"/>
    </reaction>
</comment>
<comment type="pathway">
    <text evidence="1">tRNA modification; tRNA-queuosine biosynthesis.</text>
</comment>
<comment type="subunit">
    <text evidence="1">Monomer.</text>
</comment>
<comment type="subcellular location">
    <subcellularLocation>
        <location evidence="1">Cytoplasm</location>
    </subcellularLocation>
</comment>
<comment type="similarity">
    <text evidence="1">Belongs to the QueA family.</text>
</comment>
<keyword id="KW-0963">Cytoplasm</keyword>
<keyword id="KW-0671">Queuosine biosynthesis</keyword>
<keyword id="KW-1185">Reference proteome</keyword>
<keyword id="KW-0949">S-adenosyl-L-methionine</keyword>
<keyword id="KW-0808">Transferase</keyword>
<organism>
    <name type="scientific">Pelotomaculum thermopropionicum (strain DSM 13744 / JCM 10971 / SI)</name>
    <dbReference type="NCBI Taxonomy" id="370438"/>
    <lineage>
        <taxon>Bacteria</taxon>
        <taxon>Bacillati</taxon>
        <taxon>Bacillota</taxon>
        <taxon>Clostridia</taxon>
        <taxon>Eubacteriales</taxon>
        <taxon>Desulfotomaculaceae</taxon>
        <taxon>Pelotomaculum</taxon>
    </lineage>
</organism>
<feature type="chain" id="PRO_1000076011" description="S-adenosylmethionine:tRNA ribosyltransferase-isomerase">
    <location>
        <begin position="1"/>
        <end position="341"/>
    </location>
</feature>
<sequence>MNLSDFDYFLPDELIAQEPLPERDMSRLMVVRLDGKEFEHRLFKDIVDYLNPGDALVINETKVIPARLVGRKEGTGARIELLLLRRLDSSRWEALVRPGKKAPKGTAVVFGEGLLACRILDSTAYGGRVVEFSFEGLFEEVLERVGVMPLPPYIKKPLLDQQRYQTIYARQAGSAAAPTAGLHFSPGLLSRIREMGVAVIPVLLHVGLGTFRPVRTEDIRRHRMHAEYYEITEEASRAIAETRARGGRVIAVGTTTTRCLESAAEEGGRVRPGSGWTEIFIYPGYRFKVIDGLVTNFHLPKSTLIMMVAALAGRERILAAYREAVGLRYRFFSFGDAMLII</sequence>
<name>QUEA_PELTS</name>
<protein>
    <recommendedName>
        <fullName evidence="1">S-adenosylmethionine:tRNA ribosyltransferase-isomerase</fullName>
        <ecNumber evidence="1">2.4.99.17</ecNumber>
    </recommendedName>
    <alternativeName>
        <fullName evidence="1">Queuosine biosynthesis protein QueA</fullName>
    </alternativeName>
</protein>
<dbReference type="EC" id="2.4.99.17" evidence="1"/>
<dbReference type="EMBL" id="AP009389">
    <property type="protein sequence ID" value="BAF59212.1"/>
    <property type="molecule type" value="Genomic_DNA"/>
</dbReference>
<dbReference type="SMR" id="A5D3G5"/>
<dbReference type="STRING" id="370438.PTH_1031"/>
<dbReference type="KEGG" id="pth:PTH_1031"/>
<dbReference type="eggNOG" id="COG0809">
    <property type="taxonomic scope" value="Bacteria"/>
</dbReference>
<dbReference type="HOGENOM" id="CLU_039110_1_0_9"/>
<dbReference type="UniPathway" id="UPA00392"/>
<dbReference type="Proteomes" id="UP000006556">
    <property type="component" value="Chromosome"/>
</dbReference>
<dbReference type="GO" id="GO:0005737">
    <property type="term" value="C:cytoplasm"/>
    <property type="evidence" value="ECO:0007669"/>
    <property type="project" value="UniProtKB-SubCell"/>
</dbReference>
<dbReference type="GO" id="GO:0051075">
    <property type="term" value="F:S-adenosylmethionine:tRNA ribosyltransferase-isomerase activity"/>
    <property type="evidence" value="ECO:0007669"/>
    <property type="project" value="UniProtKB-EC"/>
</dbReference>
<dbReference type="GO" id="GO:0008616">
    <property type="term" value="P:queuosine biosynthetic process"/>
    <property type="evidence" value="ECO:0007669"/>
    <property type="project" value="UniProtKB-UniRule"/>
</dbReference>
<dbReference type="GO" id="GO:0002099">
    <property type="term" value="P:tRNA wobble guanine modification"/>
    <property type="evidence" value="ECO:0007669"/>
    <property type="project" value="TreeGrafter"/>
</dbReference>
<dbReference type="FunFam" id="2.40.10.240:FF:000002">
    <property type="entry name" value="S-adenosylmethionine:tRNA ribosyltransferase-isomerase"/>
    <property type="match status" value="1"/>
</dbReference>
<dbReference type="FunFam" id="3.40.1780.10:FF:000001">
    <property type="entry name" value="S-adenosylmethionine:tRNA ribosyltransferase-isomerase"/>
    <property type="match status" value="1"/>
</dbReference>
<dbReference type="Gene3D" id="2.40.10.240">
    <property type="entry name" value="QueA-like"/>
    <property type="match status" value="1"/>
</dbReference>
<dbReference type="Gene3D" id="3.40.1780.10">
    <property type="entry name" value="QueA-like"/>
    <property type="match status" value="1"/>
</dbReference>
<dbReference type="HAMAP" id="MF_00113">
    <property type="entry name" value="QueA"/>
    <property type="match status" value="1"/>
</dbReference>
<dbReference type="InterPro" id="IPR003699">
    <property type="entry name" value="QueA"/>
</dbReference>
<dbReference type="InterPro" id="IPR042118">
    <property type="entry name" value="QueA_dom1"/>
</dbReference>
<dbReference type="InterPro" id="IPR042119">
    <property type="entry name" value="QueA_dom2"/>
</dbReference>
<dbReference type="InterPro" id="IPR036100">
    <property type="entry name" value="QueA_sf"/>
</dbReference>
<dbReference type="NCBIfam" id="NF001140">
    <property type="entry name" value="PRK00147.1"/>
    <property type="match status" value="1"/>
</dbReference>
<dbReference type="NCBIfam" id="TIGR00113">
    <property type="entry name" value="queA"/>
    <property type="match status" value="1"/>
</dbReference>
<dbReference type="PANTHER" id="PTHR30307">
    <property type="entry name" value="S-ADENOSYLMETHIONINE:TRNA RIBOSYLTRANSFERASE-ISOMERASE"/>
    <property type="match status" value="1"/>
</dbReference>
<dbReference type="PANTHER" id="PTHR30307:SF0">
    <property type="entry name" value="S-ADENOSYLMETHIONINE:TRNA RIBOSYLTRANSFERASE-ISOMERASE"/>
    <property type="match status" value="1"/>
</dbReference>
<dbReference type="Pfam" id="PF02547">
    <property type="entry name" value="Queuosine_synth"/>
    <property type="match status" value="1"/>
</dbReference>
<dbReference type="SUPFAM" id="SSF111337">
    <property type="entry name" value="QueA-like"/>
    <property type="match status" value="1"/>
</dbReference>
<evidence type="ECO:0000255" key="1">
    <source>
        <dbReference type="HAMAP-Rule" id="MF_00113"/>
    </source>
</evidence>
<accession>A5D3G5</accession>
<proteinExistence type="inferred from homology"/>
<reference key="1">
    <citation type="journal article" date="2008" name="Genome Res.">
        <title>The genome of Pelotomaculum thermopropionicum reveals niche-associated evolution in anaerobic microbiota.</title>
        <authorList>
            <person name="Kosaka T."/>
            <person name="Kato S."/>
            <person name="Shimoyama T."/>
            <person name="Ishii S."/>
            <person name="Abe T."/>
            <person name="Watanabe K."/>
        </authorList>
    </citation>
    <scope>NUCLEOTIDE SEQUENCE [LARGE SCALE GENOMIC DNA]</scope>
    <source>
        <strain>DSM 13744 / JCM 10971 / SI</strain>
    </source>
</reference>